<evidence type="ECO:0000250" key="1">
    <source>
        <dbReference type="UniProtKB" id="Q4WMJ7"/>
    </source>
</evidence>
<evidence type="ECO:0000255" key="2"/>
<evidence type="ECO:0000255" key="3">
    <source>
        <dbReference type="PROSITE-ProRule" id="PRU00258"/>
    </source>
</evidence>
<evidence type="ECO:0000269" key="4">
    <source>
    </source>
</evidence>
<evidence type="ECO:0000303" key="5">
    <source>
    </source>
</evidence>
<evidence type="ECO:0000305" key="6"/>
<evidence type="ECO:0000305" key="7">
    <source>
    </source>
</evidence>
<comment type="function">
    <text evidence="4">Nonribosomal peptide synthetase; part of the gene cluster that mediates the biosynthesis of an unusual class of epipolythiodioxopiperazines (ETPs) lacking the reactive thiol group important for toxicity (PubMed:27390873). Firstly, L-tyrosine is prenylated by tcpD, before undergoing condensation with L-glycine in a reaction catalyzed by the NRPS tcpP leading to the diketopiperazine (DKP) backbone (PubMed:27390873). Afterwards the alpha-carbon of tyrosine is oxidized by the cytochrome P450 tcpC to form a hydroxyl group (PubMed:27390873). However, in contrast other ETP biosynthesis pathways studied so far, tcpC is not able to bishydroxylate the DKP at both alpha-carbon positions, but hydroxylates the alpha-carbon of the tyrosine part and the nitrogen of the glycine part (PubMed:27390873). The next steps involve an alpha,beta-elimination reaction catalyzed by tcpI, a methylation by the methyltransferase tcpN the action of the four enzyme cascade tcpG/K/J/I (PubMed:27390873). Due to a dysfunctional cytochrome P450 monooxygenase tcpC, the pathway leads to the biosynthesis of probable non-toxic metabolites lacking the reactive thiol group (PubMed:27390873).</text>
</comment>
<comment type="pathway">
    <text evidence="7">Secondary metabolite biosynthesis.</text>
</comment>
<comment type="induction">
    <text evidence="4">Expression is positively regulated by the thioclapurine cluster-specific transcription factor tcpZ (PubMed:27390873).</text>
</comment>
<comment type="domain">
    <text evidence="1 7">NRP synthetases are composed of discrete domains (adenylation (A), thiolation (T) or peptidyl carrier protein (PCP) and condensation (C) domains) which when grouped together are referred to as a single module (By similarity). Each module is responsible for the recognition (via the A domain) and incorporation of a single amino acid into the growing peptide product (By similarity). Thus, an NRP synthetase is generally composed of one or more modules and can terminate in a thioesterase domain (TE) that releases the newly synthesized peptide from the enzyme (By similarity). Occasionally, epimerase (E) domains (responsible for L- to D-amino acid conversion) are present within the NRP synthetase (By similarity). NRPS10 has the foolowing architecture: A-T-C-A-T-C (PubMed:27390873).</text>
</comment>
<comment type="similarity">
    <text evidence="6">Belongs to the NRP synthetase family.</text>
</comment>
<feature type="chain" id="PRO_0000437701" description="Nonribosomal peptide synthetase tcpP">
    <location>
        <begin position="1"/>
        <end position="2049"/>
    </location>
</feature>
<feature type="domain" description="Carrier 1" evidence="3">
    <location>
        <begin position="497"/>
        <end position="573"/>
    </location>
</feature>
<feature type="domain" description="Carrier 2" evidence="3">
    <location>
        <begin position="1550"/>
        <end position="1625"/>
    </location>
</feature>
<feature type="region of interest" description="Adenylation 1" evidence="2">
    <location>
        <begin position="13"/>
        <end position="395"/>
    </location>
</feature>
<feature type="region of interest" description="Condensation 1" evidence="2">
    <location>
        <begin position="605"/>
        <end position="913"/>
    </location>
</feature>
<feature type="region of interest" description="Adenylation 2" evidence="2">
    <location>
        <begin position="1071"/>
        <end position="1452"/>
    </location>
</feature>
<feature type="region of interest" description="Condensation 2" evidence="2">
    <location>
        <begin position="1662"/>
        <end position="2044"/>
    </location>
</feature>
<feature type="modified residue" description="O-(pantetheine 4'-phosphoryl)serine" evidence="3">
    <location>
        <position position="534"/>
    </location>
</feature>
<feature type="modified residue" description="O-(pantetheine 4'-phosphoryl)serine" evidence="3">
    <location>
        <position position="1585"/>
    </location>
</feature>
<proteinExistence type="evidence at transcript level"/>
<name>TCPP_CLAP2</name>
<gene>
    <name evidence="5" type="primary">tcpP</name>
    <name type="ORF">CPUR_02680</name>
</gene>
<dbReference type="EC" id="6.3.2.-" evidence="7"/>
<dbReference type="EMBL" id="CAGA01000011">
    <property type="protein sequence ID" value="CCE28989.1"/>
    <property type="molecule type" value="Genomic_DNA"/>
</dbReference>
<dbReference type="SMR" id="M1WCQ3"/>
<dbReference type="STRING" id="1111077.M1WCQ3"/>
<dbReference type="VEuPathDB" id="FungiDB:CPUR_02680"/>
<dbReference type="eggNOG" id="KOG1176">
    <property type="taxonomic scope" value="Eukaryota"/>
</dbReference>
<dbReference type="eggNOG" id="KOG1178">
    <property type="taxonomic scope" value="Eukaryota"/>
</dbReference>
<dbReference type="HOGENOM" id="CLU_000022_0_5_1"/>
<dbReference type="OrthoDB" id="416786at2759"/>
<dbReference type="Proteomes" id="UP000016801">
    <property type="component" value="Unassembled WGS sequence"/>
</dbReference>
<dbReference type="GO" id="GO:0005737">
    <property type="term" value="C:cytoplasm"/>
    <property type="evidence" value="ECO:0007669"/>
    <property type="project" value="TreeGrafter"/>
</dbReference>
<dbReference type="GO" id="GO:0016853">
    <property type="term" value="F:isomerase activity"/>
    <property type="evidence" value="ECO:0007669"/>
    <property type="project" value="UniProtKB-KW"/>
</dbReference>
<dbReference type="GO" id="GO:0016874">
    <property type="term" value="F:ligase activity"/>
    <property type="evidence" value="ECO:0007669"/>
    <property type="project" value="UniProtKB-KW"/>
</dbReference>
<dbReference type="GO" id="GO:0031177">
    <property type="term" value="F:phosphopantetheine binding"/>
    <property type="evidence" value="ECO:0007669"/>
    <property type="project" value="TreeGrafter"/>
</dbReference>
<dbReference type="GO" id="GO:0043041">
    <property type="term" value="P:amino acid activation for nonribosomal peptide biosynthetic process"/>
    <property type="evidence" value="ECO:0007669"/>
    <property type="project" value="TreeGrafter"/>
</dbReference>
<dbReference type="GO" id="GO:0044550">
    <property type="term" value="P:secondary metabolite biosynthetic process"/>
    <property type="evidence" value="ECO:0007669"/>
    <property type="project" value="TreeGrafter"/>
</dbReference>
<dbReference type="CDD" id="cd17653">
    <property type="entry name" value="A_NRPS_GliP_like"/>
    <property type="match status" value="2"/>
</dbReference>
<dbReference type="CDD" id="cd19545">
    <property type="entry name" value="FUM14_C_NRPS-like"/>
    <property type="match status" value="1"/>
</dbReference>
<dbReference type="Gene3D" id="3.30.300.30">
    <property type="match status" value="2"/>
</dbReference>
<dbReference type="Gene3D" id="1.10.1200.10">
    <property type="entry name" value="ACP-like"/>
    <property type="match status" value="2"/>
</dbReference>
<dbReference type="Gene3D" id="3.30.559.10">
    <property type="entry name" value="Chloramphenicol acetyltransferase-like domain"/>
    <property type="match status" value="2"/>
</dbReference>
<dbReference type="Gene3D" id="3.40.50.12780">
    <property type="entry name" value="N-terminal domain of ligase-like"/>
    <property type="match status" value="2"/>
</dbReference>
<dbReference type="Gene3D" id="3.30.559.30">
    <property type="entry name" value="Nonribosomal peptide synthetase, condensation domain"/>
    <property type="match status" value="2"/>
</dbReference>
<dbReference type="InterPro" id="IPR036736">
    <property type="entry name" value="ACP-like_sf"/>
</dbReference>
<dbReference type="InterPro" id="IPR045851">
    <property type="entry name" value="AMP-bd_C_sf"/>
</dbReference>
<dbReference type="InterPro" id="IPR020845">
    <property type="entry name" value="AMP-binding_CS"/>
</dbReference>
<dbReference type="InterPro" id="IPR000873">
    <property type="entry name" value="AMP-dep_synth/lig_dom"/>
</dbReference>
<dbReference type="InterPro" id="IPR042099">
    <property type="entry name" value="ANL_N_sf"/>
</dbReference>
<dbReference type="InterPro" id="IPR023213">
    <property type="entry name" value="CAT-like_dom_sf"/>
</dbReference>
<dbReference type="InterPro" id="IPR001242">
    <property type="entry name" value="Condensatn"/>
</dbReference>
<dbReference type="InterPro" id="IPR009081">
    <property type="entry name" value="PP-bd_ACP"/>
</dbReference>
<dbReference type="InterPro" id="IPR006162">
    <property type="entry name" value="Ppantetheine_attach_site"/>
</dbReference>
<dbReference type="PANTHER" id="PTHR45527">
    <property type="entry name" value="NONRIBOSOMAL PEPTIDE SYNTHETASE"/>
    <property type="match status" value="1"/>
</dbReference>
<dbReference type="PANTHER" id="PTHR45527:SF11">
    <property type="entry name" value="NONRIBOSOMAL PEPTIDE SYNTHETASE 5"/>
    <property type="match status" value="1"/>
</dbReference>
<dbReference type="Pfam" id="PF00501">
    <property type="entry name" value="AMP-binding"/>
    <property type="match status" value="2"/>
</dbReference>
<dbReference type="Pfam" id="PF00668">
    <property type="entry name" value="Condensation"/>
    <property type="match status" value="2"/>
</dbReference>
<dbReference type="Pfam" id="PF00550">
    <property type="entry name" value="PP-binding"/>
    <property type="match status" value="2"/>
</dbReference>
<dbReference type="SUPFAM" id="SSF56801">
    <property type="entry name" value="Acetyl-CoA synthetase-like"/>
    <property type="match status" value="2"/>
</dbReference>
<dbReference type="SUPFAM" id="SSF47336">
    <property type="entry name" value="ACP-like"/>
    <property type="match status" value="2"/>
</dbReference>
<dbReference type="SUPFAM" id="SSF52777">
    <property type="entry name" value="CoA-dependent acyltransferases"/>
    <property type="match status" value="4"/>
</dbReference>
<dbReference type="PROSITE" id="PS00455">
    <property type="entry name" value="AMP_BINDING"/>
    <property type="match status" value="2"/>
</dbReference>
<dbReference type="PROSITE" id="PS50075">
    <property type="entry name" value="CARRIER"/>
    <property type="match status" value="2"/>
</dbReference>
<dbReference type="PROSITE" id="PS00012">
    <property type="entry name" value="PHOSPHOPANTETHEINE"/>
    <property type="match status" value="2"/>
</dbReference>
<protein>
    <recommendedName>
        <fullName evidence="5">Nonribosomal peptide synthetase tcpP</fullName>
        <shortName evidence="6">NRPS tcpP</shortName>
        <ecNumber evidence="7">6.3.2.-</ecNumber>
    </recommendedName>
    <alternativeName>
        <fullName evidence="5">Thioclapurine biosynthesis protein P</fullName>
    </alternativeName>
</protein>
<organism>
    <name type="scientific">Claviceps purpurea (strain 20.1)</name>
    <name type="common">Ergot fungus</name>
    <name type="synonym">Sphacelia segetum</name>
    <dbReference type="NCBI Taxonomy" id="1111077"/>
    <lineage>
        <taxon>Eukaryota</taxon>
        <taxon>Fungi</taxon>
        <taxon>Dikarya</taxon>
        <taxon>Ascomycota</taxon>
        <taxon>Pezizomycotina</taxon>
        <taxon>Sordariomycetes</taxon>
        <taxon>Hypocreomycetidae</taxon>
        <taxon>Hypocreales</taxon>
        <taxon>Clavicipitaceae</taxon>
        <taxon>Claviceps</taxon>
    </lineage>
</organism>
<sequence length="2049" mass="226754">MATVPVSVHDLIRHHAEAHPEALAISKNEDQITYGELYAASTRIAQLLADQGVEKGDVVPLLGSRCLEMIACTLAIFMIGATLVPMEAGSWSEARIQTVLDALEYKTLLVTADGDVRRRKTIDYHEIQRAMTGGNGWDCGNAKVPINGPESVRDVAYIIFTSGTTGNPKGVKVTHQSLLNYVWPAHANAPFNLGVGPSDTSLLLFSVAFDAFYGVLLSTLCNGGHVLLSEPSTFIDDAKKCTLLPATPTLLGTISDVSPYSNVRGIFLGGETPTPDVVRKWWTPSRSMWNAYGPTETTVSVTMAELRPDVPIVLGEPIRNSKIIILDSNLEEATQGEICVLGSTVLALGYYKNQAQTDDKFVLWNNERIYRTGDMAKWTENGLKFLGRKDQLIKNRGFLINLEADVIPAILSQNNVETATVLMHRQRLIAFVTPLTVNGDLVRQEMARRFDQFLVPDEIQSRDQLPQTINGKVDNRALYDELVQRDTVGVASNAPIATADTKLSALMNTMSEALTIPAQMIRPELSFTDVGGNSLLAIKMLSALRQKGLSLSMSSLFLLPTISEISNHIIEFDASVSHDDDDQQAADLAGCGKSLSLPGATRSAREITMTDVQRGMIRSTLHDAPTGYMLITISLHQNARDIHPSRLSNAVSQVLGRHDIFCSSFDLVRGTISVNDRYQHDWETRALDGSPMSQAIADESELLNQRARMSDTSNEFFRPVNAFRLLLGENSESVLLWLVHHALVDGWSVGKLLNDFRAQLLTEHSQAAQQSQFSQYTAALTPHLEKVHEPAELFWRESMAGLLDGTELKVGRLEDGASNGSRIEHECLSLGLSLEQTEIAARALGFSPAVIFHAAWALLLSSYASEDAVVFGSVFSARSFHVPRIEEIVGPLINLCPFPVQVHALGSKMDLLSSVQSLLLQISEYQWSASKILQDIASGSHARIFSTALFLEYDLPLYASSDQHELAAWTYDRKDWPEFGLTLQVQCVGEHLGFRAVIKDPKYESPLASRLLGHFRNLCLFLLSPKISTLAEANDSMLEPTEMLCLTRTSTSLFTPYSGPPTLKQAFEIGVAAWPMSVALESLSGKLLYQELDDITNALACSIRGLIRPRDVVALLSDGSQNWLLGVISIIKAGATYLPLDTKLPAQRMEAMMETSGACLCVYPNASSLAAFSDLSKPRYLVYEHAAVKTMNGSSSDRLEDIVGPDDYAYIMFTSGSTGTPKGIRVTHRATTSHLSFEPARLHARPGRRHAQVFSPGFDVNIAEIFGTLCYGATLVLKDPADPFAHLSRVDAAMITPSFLSVLSPTELQNLDSIYLIGEAVSQSLADRWSPGRVLYNFYGPCECTIAVAYTRLEIGRPVTLGKTIPRVGCYILDRLLRPVPMGVIGEICLYGVQTMEGYIGQNADEVTKRAFVQDPFRRPGERMYRTGDLAFWTENMEMRYVGRADHQVKVRGYRIELEEIENVIRRSDENVSQSVAIVHQDTIYAFATPQGARIDQIQQCLRQHLPSYAVPQLIIALEAFPTTPNQKLDRKALINLLAPVCSRENETTDHTELVVSQVWREVIGLDEEIALSIDDDFLAIGGNSLRQIAAAQKICSKLGCRVPLSLFITSRSIRSLAASVKKHLAQQSLASTTSVSLAEFSNQCQFLSSKLSYLEKEFLRMHKQASNPSSFNVVHRVRLQGDVDSLLLERALRTVVSKHDILRASYVEVDGVPQRVIQTNTIQIDRIECSDDVAKLHDYISTKFELSGVLIRIALVERCGATDVVLVQHHIITDQVSVQIFLTNLSMEYRALACRDESGQTICTSDHSTNDYHVWALWRDSQLEQPPENTHCEFWRSQFGEKTESIRLVQHQKHPAGEFHSVPRRLKRNSSSGSIEVYLAAAALALQKVSRLNTIRLGVPFLDRLEPGTENMMGVFLDALPVCVQIEPHTDLPSLLSTIRTTLTSALAHAIPSFMIKDIVGLDSIFEVMIVYNRFEDRVTRNMSIPGVSISVEAMRAQGAKFPLLIEFNEHVDHVTLEIEYSEDVLTPSSLSRFEQEICNLLDPQIVV</sequence>
<reference key="1">
    <citation type="journal article" date="2013" name="PLoS Genet.">
        <title>Plant-symbiotic fungi as chemical engineers: Multi-genome analysis of the Clavicipitaceae reveals dynamics of alkaloid loci.</title>
        <authorList>
            <person name="Schardl C.L."/>
            <person name="Young C.A."/>
            <person name="Hesse U."/>
            <person name="Amyotte S.G."/>
            <person name="Andreeva K."/>
            <person name="Calie P.J."/>
            <person name="Fleetwood D.J."/>
            <person name="Haws D.C."/>
            <person name="Moore N."/>
            <person name="Oeser B."/>
            <person name="Panaccione D.G."/>
            <person name="Schweri K.K."/>
            <person name="Voisey C.R."/>
            <person name="Farman M.L."/>
            <person name="Jaromczyk J.W."/>
            <person name="Roe B.A."/>
            <person name="O'Sullivan D.M."/>
            <person name="Scott B."/>
            <person name="Tudzynski P."/>
            <person name="An Z."/>
            <person name="Arnaoudova E.G."/>
            <person name="Bullock C.T."/>
            <person name="Charlton N.D."/>
            <person name="Chen L."/>
            <person name="Cox M."/>
            <person name="Dinkins R.D."/>
            <person name="Florea S."/>
            <person name="Glenn A.E."/>
            <person name="Gordon A."/>
            <person name="Gueldener U."/>
            <person name="Harris D.R."/>
            <person name="Hollin W."/>
            <person name="Jaromczyk J."/>
            <person name="Johnson R.D."/>
            <person name="Khan A.K."/>
            <person name="Leistner E."/>
            <person name="Leuchtmann A."/>
            <person name="Li C."/>
            <person name="Liu J."/>
            <person name="Liu J."/>
            <person name="Liu M."/>
            <person name="Mace W."/>
            <person name="Machado C."/>
            <person name="Nagabhyru P."/>
            <person name="Pan J."/>
            <person name="Schmid J."/>
            <person name="Sugawara K."/>
            <person name="Steiner U."/>
            <person name="Takach J.E."/>
            <person name="Tanaka E."/>
            <person name="Webb J.S."/>
            <person name="Wilson E.V."/>
            <person name="Wiseman J.L."/>
            <person name="Yoshida R."/>
            <person name="Zeng Z."/>
        </authorList>
    </citation>
    <scope>NUCLEOTIDE SEQUENCE [LARGE SCALE GENOMIC DNA]</scope>
    <source>
        <strain>20.1</strain>
    </source>
</reference>
<reference key="2">
    <citation type="journal article" date="2016" name="PLoS ONE">
        <title>The epipolythiodiketopiperazine gene cluster in Claviceps purpurea: dysfunctional cytochrome P450 enzyme prevents formation of the previously unknown clapurines.</title>
        <authorList>
            <person name="Dopstadt J."/>
            <person name="Neubauer L."/>
            <person name="Tudzynski P."/>
            <person name="Humpf H.U."/>
        </authorList>
    </citation>
    <scope>FUNCTION</scope>
    <scope>INDUCTION</scope>
</reference>
<accession>M1WCQ3</accession>
<keyword id="KW-0413">Isomerase</keyword>
<keyword id="KW-0436">Ligase</keyword>
<keyword id="KW-0596">Phosphopantetheine</keyword>
<keyword id="KW-0597">Phosphoprotein</keyword>
<keyword id="KW-1185">Reference proteome</keyword>
<keyword id="KW-0677">Repeat</keyword>